<protein>
    <recommendedName>
        <fullName evidence="6">ATP-dependent DNA helicase RecG</fullName>
        <ecNumber evidence="1">5.6.2.4</ecNumber>
    </recommendedName>
    <alternativeName>
        <fullName>DNA branch migration protein RecG</fullName>
    </alternativeName>
    <alternativeName>
        <fullName>Probable DNA 3'-5' helicase RecG</fullName>
    </alternativeName>
</protein>
<gene>
    <name evidence="6" type="primary">recG</name>
    <name evidence="8" type="ordered locus">E2348C_3916</name>
</gene>
<keyword id="KW-0067">ATP-binding</keyword>
<keyword id="KW-0227">DNA damage</keyword>
<keyword id="KW-0233">DNA recombination</keyword>
<keyword id="KW-0234">DNA repair</keyword>
<keyword id="KW-0238">DNA-binding</keyword>
<keyword id="KW-0347">Helicase</keyword>
<keyword id="KW-0378">Hydrolase</keyword>
<keyword id="KW-0413">Isomerase</keyword>
<keyword id="KW-0547">Nucleotide-binding</keyword>
<keyword id="KW-1185">Reference proteome</keyword>
<accession>B7UM74</accession>
<comment type="function">
    <text evidence="1">Plays a critical role in recombination and DNA repair. Helps process Holliday junction intermediates to mature products by catalyzing branch migration. Has replication fork regression activity, unwinds stalled or blocked replication forks to make a HJ that can be resolved. Has a DNA unwinding activity characteristic of a DNA helicase with 3'-5' polarity (By similarity).</text>
</comment>
<comment type="function">
    <text evidence="5">Plays a role in recovery after DNA ADP-ribosylation.</text>
</comment>
<comment type="catalytic activity">
    <reaction evidence="1">
        <text>Couples ATP hydrolysis with the unwinding of duplex DNA by translocating in the 3'-5' direction.</text>
        <dbReference type="EC" id="5.6.2.4"/>
    </reaction>
</comment>
<comment type="catalytic activity">
    <reaction evidence="1">
        <text>ATP + H2O = ADP + phosphate + H(+)</text>
        <dbReference type="Rhea" id="RHEA:13065"/>
        <dbReference type="ChEBI" id="CHEBI:15377"/>
        <dbReference type="ChEBI" id="CHEBI:15378"/>
        <dbReference type="ChEBI" id="CHEBI:30616"/>
        <dbReference type="ChEBI" id="CHEBI:43474"/>
        <dbReference type="ChEBI" id="CHEBI:456216"/>
        <dbReference type="EC" id="5.6.2.4"/>
    </reaction>
</comment>
<comment type="subunit">
    <text evidence="2">Monomer (By similarity).</text>
</comment>
<comment type="domain">
    <text evidence="2">The wedge domain within the N-terminus inserts into the replication fork junction, where the lagging and leading strand split (By similarity).</text>
</comment>
<comment type="disruption phenotype">
    <text evidence="5">Significantly reduced survival of cells expressing DNA ADP-ribosyl transferase (darT) mutant G49D.</text>
</comment>
<comment type="similarity">
    <text evidence="7">Belongs to the helicase family. RecG subfamily.</text>
</comment>
<sequence length="693" mass="76553">MKGRLLDAVPLSSLTGVGAALSNKLAKINLHTVQDLLLHLPLRYEDRTHLYPIGELLPGVYATVEGEVLNCNISFGSRRMMTCQISDGSGILTMRFFNFNAAMKNSLATGRRVLAYGEAKRGKYGAEMIHPEYRVQGDLSTPELQETLTPVYPTTEGVKQATLRKLTDQALDLLDTCAIEELLPPELSQGMMTLPEALRTLHRPPPTLQLSDLETGQHPAQRRLILEELLAHNLSMLALRAGAQRFHAQPLSANDALKNKLLAALPFKPTGAQARVVAEIERDMALDVPMMRLVQGDVGSGKTLVAALAALRAVAHGKQVALMAPTELLAEQHANNFRNWFAPLGIEVGWLAGKQKGKARLAQQEAIASGQVQMIVGTHAIFQEQVQFNGLALVIIDEQHRFGVHQRLALWEKGQQQGFHPHQLIMTATPIPRTLAMTAYADLDTSVIDELPPGRTPVTTVAIPDTRRIDIIDRVRHACMTEGRQAYWVCTLIEESELLEAQAAEATWEELKLALPELNVGLVHGRMKPAEKQAVMTSFKQGELHLLVATTVIEVGVDVPNASLMIIENPERLGLAQLHQLRGRVGRGAVASHCVLLYKTPLSKTAQIRLQVLRDSNDGFVIAQKDLEIRGPGELLGTRQTGNAEFKVADLLRDQAMIPEVQRLARHIHERYPQQAKALIERWMPETERYSNA</sequence>
<organism>
    <name type="scientific">Escherichia coli O127:H6 (strain E2348/69 / EPEC)</name>
    <dbReference type="NCBI Taxonomy" id="574521"/>
    <lineage>
        <taxon>Bacteria</taxon>
        <taxon>Pseudomonadati</taxon>
        <taxon>Pseudomonadota</taxon>
        <taxon>Gammaproteobacteria</taxon>
        <taxon>Enterobacterales</taxon>
        <taxon>Enterobacteriaceae</taxon>
        <taxon>Escherichia</taxon>
    </lineage>
</organism>
<reference evidence="8" key="1">
    <citation type="journal article" date="2009" name="J. Bacteriol.">
        <title>Complete genome sequence and comparative genome analysis of enteropathogenic Escherichia coli O127:H6 strain E2348/69.</title>
        <authorList>
            <person name="Iguchi A."/>
            <person name="Thomson N.R."/>
            <person name="Ogura Y."/>
            <person name="Saunders D."/>
            <person name="Ooka T."/>
            <person name="Henderson I.R."/>
            <person name="Harris D."/>
            <person name="Asadulghani M."/>
            <person name="Kurokawa K."/>
            <person name="Dean P."/>
            <person name="Kenny B."/>
            <person name="Quail M.A."/>
            <person name="Thurston S."/>
            <person name="Dougan G."/>
            <person name="Hayashi T."/>
            <person name="Parkhill J."/>
            <person name="Frankel G."/>
        </authorList>
    </citation>
    <scope>NUCLEOTIDE SEQUENCE [LARGE SCALE GENOMIC DNA]</scope>
    <source>
        <strain>E2348/69 / EPEC</strain>
    </source>
</reference>
<reference key="2">
    <citation type="journal article" date="2020" name="Cell Rep.">
        <title>DNA ADP-Ribosylation Stalls Replication and Is Reversed by RecF-Mediated Homologous Recombination and Nucleotide Excision Repair.</title>
        <authorList>
            <person name="Lawaree E."/>
            <person name="Jankevicius G."/>
            <person name="Cooper C."/>
            <person name="Ahel I."/>
            <person name="Uphoff S."/>
            <person name="Tang C.M."/>
        </authorList>
    </citation>
    <scope>FUNCTION</scope>
    <scope>DISRUPTION PHENOTYPE</scope>
    <source>
        <strain>E2348/69 / EPEC</strain>
    </source>
</reference>
<evidence type="ECO:0000250" key="1">
    <source>
        <dbReference type="UniProtKB" id="P24230"/>
    </source>
</evidence>
<evidence type="ECO:0000250" key="2">
    <source>
        <dbReference type="UniProtKB" id="Q9WY48"/>
    </source>
</evidence>
<evidence type="ECO:0000255" key="3">
    <source>
        <dbReference type="PROSITE-ProRule" id="PRU00541"/>
    </source>
</evidence>
<evidence type="ECO:0000255" key="4">
    <source>
        <dbReference type="PROSITE-ProRule" id="PRU00542"/>
    </source>
</evidence>
<evidence type="ECO:0000269" key="5">
    <source>
    </source>
</evidence>
<evidence type="ECO:0000303" key="6">
    <source>
    </source>
</evidence>
<evidence type="ECO:0000305" key="7"/>
<evidence type="ECO:0000312" key="8">
    <source>
        <dbReference type="EMBL" id="CAS11464.1"/>
    </source>
</evidence>
<dbReference type="EC" id="5.6.2.4" evidence="1"/>
<dbReference type="EMBL" id="FM180568">
    <property type="protein sequence ID" value="CAS11464.1"/>
    <property type="molecule type" value="Genomic_DNA"/>
</dbReference>
<dbReference type="RefSeq" id="WP_000678455.1">
    <property type="nucleotide sequence ID" value="NC_011601.1"/>
</dbReference>
<dbReference type="SMR" id="B7UM74"/>
<dbReference type="KEGG" id="ecg:E2348C_3916"/>
<dbReference type="HOGENOM" id="CLU_005122_7_1_6"/>
<dbReference type="Proteomes" id="UP000008205">
    <property type="component" value="Chromosome"/>
</dbReference>
<dbReference type="GO" id="GO:0005524">
    <property type="term" value="F:ATP binding"/>
    <property type="evidence" value="ECO:0007669"/>
    <property type="project" value="UniProtKB-KW"/>
</dbReference>
<dbReference type="GO" id="GO:0016887">
    <property type="term" value="F:ATP hydrolysis activity"/>
    <property type="evidence" value="ECO:0007669"/>
    <property type="project" value="RHEA"/>
</dbReference>
<dbReference type="GO" id="GO:0003677">
    <property type="term" value="F:DNA binding"/>
    <property type="evidence" value="ECO:0007669"/>
    <property type="project" value="UniProtKB-KW"/>
</dbReference>
<dbReference type="GO" id="GO:0003678">
    <property type="term" value="F:DNA helicase activity"/>
    <property type="evidence" value="ECO:0007669"/>
    <property type="project" value="InterPro"/>
</dbReference>
<dbReference type="GO" id="GO:0006310">
    <property type="term" value="P:DNA recombination"/>
    <property type="evidence" value="ECO:0007669"/>
    <property type="project" value="UniProtKB-KW"/>
</dbReference>
<dbReference type="GO" id="GO:0006281">
    <property type="term" value="P:DNA repair"/>
    <property type="evidence" value="ECO:0007669"/>
    <property type="project" value="UniProtKB-KW"/>
</dbReference>
<dbReference type="CDD" id="cd17992">
    <property type="entry name" value="DEXHc_RecG"/>
    <property type="match status" value="1"/>
</dbReference>
<dbReference type="CDD" id="cd04488">
    <property type="entry name" value="RecG_wedge_OBF"/>
    <property type="match status" value="1"/>
</dbReference>
<dbReference type="CDD" id="cd18811">
    <property type="entry name" value="SF2_C_RecG"/>
    <property type="match status" value="1"/>
</dbReference>
<dbReference type="FunFam" id="2.40.50.140:FF:000134">
    <property type="entry name" value="ATP-dependent DNA helicase RecG"/>
    <property type="match status" value="1"/>
</dbReference>
<dbReference type="FunFam" id="3.40.50.300:FF:000391">
    <property type="entry name" value="ATP-dependent DNA helicase RecG"/>
    <property type="match status" value="1"/>
</dbReference>
<dbReference type="FunFam" id="3.40.50.300:FF:000715">
    <property type="entry name" value="ATP-dependent DNA helicase RecG"/>
    <property type="match status" value="1"/>
</dbReference>
<dbReference type="Gene3D" id="2.40.50.140">
    <property type="entry name" value="Nucleic acid-binding proteins"/>
    <property type="match status" value="1"/>
</dbReference>
<dbReference type="Gene3D" id="3.40.50.300">
    <property type="entry name" value="P-loop containing nucleotide triphosphate hydrolases"/>
    <property type="match status" value="2"/>
</dbReference>
<dbReference type="InterPro" id="IPR004609">
    <property type="entry name" value="ATP-dep_DNA_helicase_RecG"/>
</dbReference>
<dbReference type="InterPro" id="IPR011545">
    <property type="entry name" value="DEAD/DEAH_box_helicase_dom"/>
</dbReference>
<dbReference type="InterPro" id="IPR014001">
    <property type="entry name" value="Helicase_ATP-bd"/>
</dbReference>
<dbReference type="InterPro" id="IPR001650">
    <property type="entry name" value="Helicase_C-like"/>
</dbReference>
<dbReference type="InterPro" id="IPR012340">
    <property type="entry name" value="NA-bd_OB-fold"/>
</dbReference>
<dbReference type="InterPro" id="IPR027417">
    <property type="entry name" value="P-loop_NTPase"/>
</dbReference>
<dbReference type="InterPro" id="IPR047112">
    <property type="entry name" value="RecG/Mfd"/>
</dbReference>
<dbReference type="InterPro" id="IPR045562">
    <property type="entry name" value="RecG_dom3_C"/>
</dbReference>
<dbReference type="InterPro" id="IPR033454">
    <property type="entry name" value="RecG_wedge"/>
</dbReference>
<dbReference type="NCBIfam" id="NF008163">
    <property type="entry name" value="PRK10917.1-1"/>
    <property type="match status" value="1"/>
</dbReference>
<dbReference type="NCBIfam" id="NF008165">
    <property type="entry name" value="PRK10917.1-3"/>
    <property type="match status" value="1"/>
</dbReference>
<dbReference type="NCBIfam" id="NF008166">
    <property type="entry name" value="PRK10917.1-4"/>
    <property type="match status" value="1"/>
</dbReference>
<dbReference type="NCBIfam" id="NF008168">
    <property type="entry name" value="PRK10917.2-2"/>
    <property type="match status" value="1"/>
</dbReference>
<dbReference type="NCBIfam" id="TIGR00643">
    <property type="entry name" value="recG"/>
    <property type="match status" value="1"/>
</dbReference>
<dbReference type="PANTHER" id="PTHR47964">
    <property type="entry name" value="ATP-DEPENDENT DNA HELICASE HOMOLOG RECG, CHLOROPLASTIC"/>
    <property type="match status" value="1"/>
</dbReference>
<dbReference type="PANTHER" id="PTHR47964:SF1">
    <property type="entry name" value="ATP-DEPENDENT DNA HELICASE HOMOLOG RECG, CHLOROPLASTIC"/>
    <property type="match status" value="1"/>
</dbReference>
<dbReference type="Pfam" id="PF00270">
    <property type="entry name" value="DEAD"/>
    <property type="match status" value="1"/>
</dbReference>
<dbReference type="Pfam" id="PF00271">
    <property type="entry name" value="Helicase_C"/>
    <property type="match status" value="1"/>
</dbReference>
<dbReference type="Pfam" id="PF19833">
    <property type="entry name" value="RecG_dom3_C"/>
    <property type="match status" value="1"/>
</dbReference>
<dbReference type="Pfam" id="PF17191">
    <property type="entry name" value="RecG_wedge"/>
    <property type="match status" value="1"/>
</dbReference>
<dbReference type="SMART" id="SM00487">
    <property type="entry name" value="DEXDc"/>
    <property type="match status" value="1"/>
</dbReference>
<dbReference type="SMART" id="SM00490">
    <property type="entry name" value="HELICc"/>
    <property type="match status" value="1"/>
</dbReference>
<dbReference type="SUPFAM" id="SSF50249">
    <property type="entry name" value="Nucleic acid-binding proteins"/>
    <property type="match status" value="1"/>
</dbReference>
<dbReference type="SUPFAM" id="SSF52540">
    <property type="entry name" value="P-loop containing nucleoside triphosphate hydrolases"/>
    <property type="match status" value="2"/>
</dbReference>
<dbReference type="PROSITE" id="PS51192">
    <property type="entry name" value="HELICASE_ATP_BIND_1"/>
    <property type="match status" value="1"/>
</dbReference>
<dbReference type="PROSITE" id="PS51194">
    <property type="entry name" value="HELICASE_CTER"/>
    <property type="match status" value="1"/>
</dbReference>
<proteinExistence type="inferred from homology"/>
<feature type="chain" id="PRO_0000456042" description="ATP-dependent DNA helicase RecG">
    <location>
        <begin position="1"/>
        <end position="693"/>
    </location>
</feature>
<feature type="domain" description="Helicase ATP-binding" evidence="3">
    <location>
        <begin position="283"/>
        <end position="448"/>
    </location>
</feature>
<feature type="domain" description="Helicase C-terminal" evidence="4">
    <location>
        <begin position="482"/>
        <end position="628"/>
    </location>
</feature>
<feature type="region of interest" description="Wedge domain" evidence="2">
    <location>
        <begin position="48"/>
        <end position="146"/>
    </location>
</feature>
<feature type="short sequence motif" description="DEAH box" evidence="3">
    <location>
        <begin position="397"/>
        <end position="400"/>
    </location>
</feature>
<feature type="binding site" evidence="3">
    <location>
        <begin position="296"/>
        <end position="303"/>
    </location>
    <ligand>
        <name>ATP</name>
        <dbReference type="ChEBI" id="CHEBI:30616"/>
    </ligand>
</feature>
<name>RECG_ECO27</name>